<protein>
    <recommendedName>
        <fullName>Fumarate reductase iron-sulfur subunit</fullName>
        <ecNumber evidence="1">1.3.5.1</ecNumber>
    </recommendedName>
    <alternativeName>
        <fullName>Quinol-fumarate reductase iron-sulfur subunit</fullName>
        <shortName>QFR iron-sulfur subunit</shortName>
    </alternativeName>
</protein>
<reference key="1">
    <citation type="journal article" date="2002" name="Nucleic Acids Res.">
        <title>Genome sequence of Shigella flexneri 2a: insights into pathogenicity through comparison with genomes of Escherichia coli K12 and O157.</title>
        <authorList>
            <person name="Jin Q."/>
            <person name="Yuan Z."/>
            <person name="Xu J."/>
            <person name="Wang Y."/>
            <person name="Shen Y."/>
            <person name="Lu W."/>
            <person name="Wang J."/>
            <person name="Liu H."/>
            <person name="Yang J."/>
            <person name="Yang F."/>
            <person name="Zhang X."/>
            <person name="Zhang J."/>
            <person name="Yang G."/>
            <person name="Wu H."/>
            <person name="Qu D."/>
            <person name="Dong J."/>
            <person name="Sun L."/>
            <person name="Xue Y."/>
            <person name="Zhao A."/>
            <person name="Gao Y."/>
            <person name="Zhu J."/>
            <person name="Kan B."/>
            <person name="Ding K."/>
            <person name="Chen S."/>
            <person name="Cheng H."/>
            <person name="Yao Z."/>
            <person name="He B."/>
            <person name="Chen R."/>
            <person name="Ma D."/>
            <person name="Qiang B."/>
            <person name="Wen Y."/>
            <person name="Hou Y."/>
            <person name="Yu J."/>
        </authorList>
    </citation>
    <scope>NUCLEOTIDE SEQUENCE [LARGE SCALE GENOMIC DNA]</scope>
    <source>
        <strain>301 / Serotype 2a</strain>
    </source>
</reference>
<reference key="2">
    <citation type="journal article" date="2003" name="Infect. Immun.">
        <title>Complete genome sequence and comparative genomics of Shigella flexneri serotype 2a strain 2457T.</title>
        <authorList>
            <person name="Wei J."/>
            <person name="Goldberg M.B."/>
            <person name="Burland V."/>
            <person name="Venkatesan M.M."/>
            <person name="Deng W."/>
            <person name="Fournier G."/>
            <person name="Mayhew G.F."/>
            <person name="Plunkett G. III"/>
            <person name="Rose D.J."/>
            <person name="Darling A."/>
            <person name="Mau B."/>
            <person name="Perna N.T."/>
            <person name="Payne S.M."/>
            <person name="Runyen-Janecky L.J."/>
            <person name="Zhou S."/>
            <person name="Schwartz D.C."/>
            <person name="Blattner F.R."/>
        </authorList>
    </citation>
    <scope>NUCLEOTIDE SEQUENCE [LARGE SCALE GENOMIC DNA]</scope>
    <source>
        <strain>ATCC 700930 / 2457T / Serotype 2a</strain>
    </source>
</reference>
<evidence type="ECO:0000250" key="1">
    <source>
        <dbReference type="UniProtKB" id="P0AC47"/>
    </source>
</evidence>
<evidence type="ECO:0000255" key="2">
    <source>
        <dbReference type="PROSITE-ProRule" id="PRU00465"/>
    </source>
</evidence>
<evidence type="ECO:0000255" key="3">
    <source>
        <dbReference type="PROSITE-ProRule" id="PRU00711"/>
    </source>
</evidence>
<evidence type="ECO:0000305" key="4"/>
<dbReference type="EC" id="1.3.5.1" evidence="1"/>
<dbReference type="EMBL" id="AE005674">
    <property type="protein sequence ID" value="AAN45729.2"/>
    <property type="molecule type" value="Genomic_DNA"/>
</dbReference>
<dbReference type="EMBL" id="AE014073">
    <property type="protein sequence ID" value="AAP19513.1"/>
    <property type="molecule type" value="Genomic_DNA"/>
</dbReference>
<dbReference type="RefSeq" id="NP_710022.2">
    <property type="nucleotide sequence ID" value="NC_004337.2"/>
</dbReference>
<dbReference type="RefSeq" id="WP_000829498.1">
    <property type="nucleotide sequence ID" value="NZ_WPGW01000002.1"/>
</dbReference>
<dbReference type="SMR" id="P0AC50"/>
<dbReference type="STRING" id="198214.SF4311"/>
<dbReference type="PaxDb" id="198214-SF4311"/>
<dbReference type="GeneID" id="1026842"/>
<dbReference type="GeneID" id="93777669"/>
<dbReference type="KEGG" id="sfl:SF4311"/>
<dbReference type="KEGG" id="sfx:S4576"/>
<dbReference type="PATRIC" id="fig|198214.7.peg.5082"/>
<dbReference type="HOGENOM" id="CLU_044838_3_2_6"/>
<dbReference type="Proteomes" id="UP000001006">
    <property type="component" value="Chromosome"/>
</dbReference>
<dbReference type="Proteomes" id="UP000002673">
    <property type="component" value="Chromosome"/>
</dbReference>
<dbReference type="GO" id="GO:0005886">
    <property type="term" value="C:plasma membrane"/>
    <property type="evidence" value="ECO:0007669"/>
    <property type="project" value="UniProtKB-SubCell"/>
</dbReference>
<dbReference type="GO" id="GO:0051537">
    <property type="term" value="F:2 iron, 2 sulfur cluster binding"/>
    <property type="evidence" value="ECO:0007669"/>
    <property type="project" value="UniProtKB-KW"/>
</dbReference>
<dbReference type="GO" id="GO:0051538">
    <property type="term" value="F:3 iron, 4 sulfur cluster binding"/>
    <property type="evidence" value="ECO:0007669"/>
    <property type="project" value="UniProtKB-KW"/>
</dbReference>
<dbReference type="GO" id="GO:0051539">
    <property type="term" value="F:4 iron, 4 sulfur cluster binding"/>
    <property type="evidence" value="ECO:0007669"/>
    <property type="project" value="UniProtKB-KW"/>
</dbReference>
<dbReference type="GO" id="GO:0009055">
    <property type="term" value="F:electron transfer activity"/>
    <property type="evidence" value="ECO:0007669"/>
    <property type="project" value="InterPro"/>
</dbReference>
<dbReference type="GO" id="GO:0046872">
    <property type="term" value="F:metal ion binding"/>
    <property type="evidence" value="ECO:0007669"/>
    <property type="project" value="UniProtKB-KW"/>
</dbReference>
<dbReference type="GO" id="GO:0008177">
    <property type="term" value="F:succinate dehydrogenase (quinone) activity"/>
    <property type="evidence" value="ECO:0007669"/>
    <property type="project" value="RHEA"/>
</dbReference>
<dbReference type="GO" id="GO:0009061">
    <property type="term" value="P:anaerobic respiration"/>
    <property type="evidence" value="ECO:0007669"/>
    <property type="project" value="TreeGrafter"/>
</dbReference>
<dbReference type="GO" id="GO:0006099">
    <property type="term" value="P:tricarboxylic acid cycle"/>
    <property type="evidence" value="ECO:0007669"/>
    <property type="project" value="UniProtKB-KW"/>
</dbReference>
<dbReference type="FunFam" id="1.10.1060.10:FF:000002">
    <property type="entry name" value="Succinate dehydrogenase iron-sulfur subunit"/>
    <property type="match status" value="1"/>
</dbReference>
<dbReference type="FunFam" id="3.10.20.30:FF:000009">
    <property type="entry name" value="Succinate dehydrogenase iron-sulfur subunit"/>
    <property type="match status" value="1"/>
</dbReference>
<dbReference type="Gene3D" id="3.10.20.30">
    <property type="match status" value="1"/>
</dbReference>
<dbReference type="Gene3D" id="1.10.1060.10">
    <property type="entry name" value="Alpha-helical ferredoxin"/>
    <property type="match status" value="1"/>
</dbReference>
<dbReference type="InterPro" id="IPR036010">
    <property type="entry name" value="2Fe-2S_ferredoxin-like_sf"/>
</dbReference>
<dbReference type="InterPro" id="IPR001041">
    <property type="entry name" value="2Fe-2S_ferredoxin-type"/>
</dbReference>
<dbReference type="InterPro" id="IPR006058">
    <property type="entry name" value="2Fe2S_fd_BS"/>
</dbReference>
<dbReference type="InterPro" id="IPR017896">
    <property type="entry name" value="4Fe4S_Fe-S-bd"/>
</dbReference>
<dbReference type="InterPro" id="IPR017900">
    <property type="entry name" value="4Fe4S_Fe_S_CS"/>
</dbReference>
<dbReference type="InterPro" id="IPR012675">
    <property type="entry name" value="Beta-grasp_dom_sf"/>
</dbReference>
<dbReference type="InterPro" id="IPR009051">
    <property type="entry name" value="Helical_ferredxn"/>
</dbReference>
<dbReference type="InterPro" id="IPR004489">
    <property type="entry name" value="Succ_DH/fum_Rdtase_Fe-S"/>
</dbReference>
<dbReference type="InterPro" id="IPR025192">
    <property type="entry name" value="Succ_DH/fum_Rdtase_N"/>
</dbReference>
<dbReference type="NCBIfam" id="TIGR00384">
    <property type="entry name" value="dhsB"/>
    <property type="match status" value="1"/>
</dbReference>
<dbReference type="NCBIfam" id="NF004616">
    <property type="entry name" value="PRK05950.1"/>
    <property type="match status" value="1"/>
</dbReference>
<dbReference type="NCBIfam" id="NF009051">
    <property type="entry name" value="PRK12385.1"/>
    <property type="match status" value="1"/>
</dbReference>
<dbReference type="PANTHER" id="PTHR43551">
    <property type="entry name" value="FUMARATE REDUCTASE IRON-SULFUR SUBUNIT"/>
    <property type="match status" value="1"/>
</dbReference>
<dbReference type="PANTHER" id="PTHR43551:SF2">
    <property type="entry name" value="FUMARATE REDUCTASE IRON-SULFUR SUBUNIT"/>
    <property type="match status" value="1"/>
</dbReference>
<dbReference type="Pfam" id="PF13085">
    <property type="entry name" value="Fer2_3"/>
    <property type="match status" value="1"/>
</dbReference>
<dbReference type="Pfam" id="PF13237">
    <property type="entry name" value="Fer4_10"/>
    <property type="match status" value="1"/>
</dbReference>
<dbReference type="SUPFAM" id="SSF54292">
    <property type="entry name" value="2Fe-2S ferredoxin-like"/>
    <property type="match status" value="1"/>
</dbReference>
<dbReference type="SUPFAM" id="SSF46548">
    <property type="entry name" value="alpha-helical ferredoxin"/>
    <property type="match status" value="1"/>
</dbReference>
<dbReference type="PROSITE" id="PS00197">
    <property type="entry name" value="2FE2S_FER_1"/>
    <property type="match status" value="1"/>
</dbReference>
<dbReference type="PROSITE" id="PS51085">
    <property type="entry name" value="2FE2S_FER_2"/>
    <property type="match status" value="1"/>
</dbReference>
<dbReference type="PROSITE" id="PS00198">
    <property type="entry name" value="4FE4S_FER_1"/>
    <property type="match status" value="1"/>
</dbReference>
<dbReference type="PROSITE" id="PS51379">
    <property type="entry name" value="4FE4S_FER_2"/>
    <property type="match status" value="1"/>
</dbReference>
<proteinExistence type="inferred from homology"/>
<feature type="initiator methionine" description="Removed" evidence="1">
    <location>
        <position position="1"/>
    </location>
</feature>
<feature type="chain" id="PRO_0000158701" description="Fumarate reductase iron-sulfur subunit">
    <location>
        <begin position="2"/>
        <end position="244"/>
    </location>
</feature>
<feature type="domain" description="2Fe-2S ferredoxin-type" evidence="2">
    <location>
        <begin position="16"/>
        <end position="97"/>
    </location>
</feature>
<feature type="domain" description="4Fe-4S ferredoxin-type" evidence="3">
    <location>
        <begin position="140"/>
        <end position="169"/>
    </location>
</feature>
<feature type="binding site" evidence="1">
    <location>
        <position position="14"/>
    </location>
    <ligand>
        <name>a menaquinone</name>
        <dbReference type="ChEBI" id="CHEBI:16374"/>
    </ligand>
</feature>
<feature type="binding site" evidence="1">
    <location>
        <position position="58"/>
    </location>
    <ligand>
        <name>[2Fe-2S] cluster</name>
        <dbReference type="ChEBI" id="CHEBI:190135"/>
    </ligand>
</feature>
<feature type="binding site" evidence="1">
    <location>
        <position position="63"/>
    </location>
    <ligand>
        <name>[2Fe-2S] cluster</name>
        <dbReference type="ChEBI" id="CHEBI:190135"/>
    </ligand>
</feature>
<feature type="binding site" evidence="1">
    <location>
        <position position="66"/>
    </location>
    <ligand>
        <name>[2Fe-2S] cluster</name>
        <dbReference type="ChEBI" id="CHEBI:190135"/>
    </ligand>
</feature>
<feature type="binding site" evidence="1">
    <location>
        <position position="78"/>
    </location>
    <ligand>
        <name>[2Fe-2S] cluster</name>
        <dbReference type="ChEBI" id="CHEBI:190135"/>
    </ligand>
</feature>
<feature type="binding site" evidence="1">
    <location>
        <position position="149"/>
    </location>
    <ligand>
        <name>[4Fe-4S] cluster</name>
        <dbReference type="ChEBI" id="CHEBI:49883"/>
    </ligand>
</feature>
<feature type="binding site" evidence="1">
    <location>
        <position position="152"/>
    </location>
    <ligand>
        <name>[4Fe-4S] cluster</name>
        <dbReference type="ChEBI" id="CHEBI:49883"/>
    </ligand>
</feature>
<feature type="binding site" evidence="1">
    <location>
        <position position="155"/>
    </location>
    <ligand>
        <name>[4Fe-4S] cluster</name>
        <dbReference type="ChEBI" id="CHEBI:49883"/>
    </ligand>
</feature>
<feature type="binding site" evidence="1">
    <location>
        <position position="159"/>
    </location>
    <ligand>
        <name>[3Fe-4S] cluster</name>
        <dbReference type="ChEBI" id="CHEBI:21137"/>
    </ligand>
</feature>
<feature type="binding site" evidence="1">
    <location>
        <position position="205"/>
    </location>
    <ligand>
        <name>[3Fe-4S] cluster</name>
        <dbReference type="ChEBI" id="CHEBI:21137"/>
    </ligand>
</feature>
<feature type="binding site" evidence="1">
    <location>
        <position position="211"/>
    </location>
    <ligand>
        <name>[3Fe-4S] cluster</name>
        <dbReference type="ChEBI" id="CHEBI:21137"/>
    </ligand>
</feature>
<feature type="binding site" evidence="1">
    <location>
        <position position="215"/>
    </location>
    <ligand>
        <name>[4Fe-4S] cluster</name>
        <dbReference type="ChEBI" id="CHEBI:49883"/>
    </ligand>
</feature>
<feature type="binding site" evidence="1">
    <location>
        <begin position="226"/>
        <end position="229"/>
    </location>
    <ligand>
        <name>a menaquinone</name>
        <dbReference type="ChEBI" id="CHEBI:16374"/>
    </ligand>
</feature>
<organism>
    <name type="scientific">Shigella flexneri</name>
    <dbReference type="NCBI Taxonomy" id="623"/>
    <lineage>
        <taxon>Bacteria</taxon>
        <taxon>Pseudomonadati</taxon>
        <taxon>Pseudomonadota</taxon>
        <taxon>Gammaproteobacteria</taxon>
        <taxon>Enterobacterales</taxon>
        <taxon>Enterobacteriaceae</taxon>
        <taxon>Shigella</taxon>
    </lineage>
</organism>
<name>FRDB_SHIFL</name>
<accession>P0AC50</accession>
<accession>P00364</accession>
<keyword id="KW-0001">2Fe-2S</keyword>
<keyword id="KW-0003">3Fe-4S</keyword>
<keyword id="KW-0004">4Fe-4S</keyword>
<keyword id="KW-0997">Cell inner membrane</keyword>
<keyword id="KW-1003">Cell membrane</keyword>
<keyword id="KW-0249">Electron transport</keyword>
<keyword id="KW-0408">Iron</keyword>
<keyword id="KW-0411">Iron-sulfur</keyword>
<keyword id="KW-0472">Membrane</keyword>
<keyword id="KW-0479">Metal-binding</keyword>
<keyword id="KW-0560">Oxidoreductase</keyword>
<keyword id="KW-1185">Reference proteome</keyword>
<keyword id="KW-0813">Transport</keyword>
<keyword id="KW-0816">Tricarboxylic acid cycle</keyword>
<gene>
    <name type="primary">frdB</name>
    <name type="ordered locus">SF4311</name>
    <name type="ordered locus">S4576</name>
</gene>
<comment type="function">
    <text evidence="1">Two distinct, membrane-bound, FAD-containing enzymes are responsible for the catalysis of fumarate and succinate interconversion; the fumarate reductase is used in anaerobic growth, and the succinate dehydrogenase is used in aerobic growth.</text>
</comment>
<comment type="catalytic activity">
    <reaction evidence="1">
        <text>a quinone + succinate = fumarate + a quinol</text>
        <dbReference type="Rhea" id="RHEA:40523"/>
        <dbReference type="ChEBI" id="CHEBI:24646"/>
        <dbReference type="ChEBI" id="CHEBI:29806"/>
        <dbReference type="ChEBI" id="CHEBI:30031"/>
        <dbReference type="ChEBI" id="CHEBI:132124"/>
        <dbReference type="EC" id="1.3.5.1"/>
    </reaction>
</comment>
<comment type="catalytic activity">
    <reaction evidence="1">
        <text>a menaquinone + succinate = a menaquinol + fumarate</text>
        <dbReference type="Rhea" id="RHEA:27834"/>
        <dbReference type="Rhea" id="RHEA-COMP:9537"/>
        <dbReference type="Rhea" id="RHEA-COMP:9539"/>
        <dbReference type="ChEBI" id="CHEBI:16374"/>
        <dbReference type="ChEBI" id="CHEBI:18151"/>
        <dbReference type="ChEBI" id="CHEBI:29806"/>
        <dbReference type="ChEBI" id="CHEBI:30031"/>
        <dbReference type="EC" id="1.3.5.1"/>
    </reaction>
</comment>
<comment type="cofactor">
    <cofactor evidence="1">
        <name>[2Fe-2S] cluster</name>
        <dbReference type="ChEBI" id="CHEBI:190135"/>
    </cofactor>
    <text evidence="1">Binds 1 [2Fe-2S] cluster.</text>
</comment>
<comment type="cofactor">
    <cofactor evidence="1">
        <name>[3Fe-4S] cluster</name>
        <dbReference type="ChEBI" id="CHEBI:21137"/>
    </cofactor>
    <text evidence="1">Binds 1 [3Fe-4S] cluster.</text>
</comment>
<comment type="cofactor">
    <cofactor evidence="1">
        <name>[4Fe-4S] cluster</name>
        <dbReference type="ChEBI" id="CHEBI:49883"/>
    </cofactor>
    <text evidence="1">Binds 1 [4Fe-4S] cluster.</text>
</comment>
<comment type="subunit">
    <text evidence="1">Fumarate dehydrogenase forms part of an enzyme complex containing four subunits: a flavoprotein, an iron-sulfur, and two hydrophobic anchor proteins.</text>
</comment>
<comment type="subcellular location">
    <subcellularLocation>
        <location evidence="1">Cell inner membrane</location>
        <topology evidence="1">Peripheral membrane protein</topology>
        <orientation evidence="1">Cytoplasmic side</orientation>
    </subcellularLocation>
</comment>
<comment type="similarity">
    <text evidence="4">Belongs to the succinate dehydrogenase/fumarate reductase iron-sulfur protein family.</text>
</comment>
<sequence length="244" mass="27123">MAEMKNLKIEVVRYNPEVDTAPHSAFYEVPYDATTSLLDALGYIKDNLAPDLSYRWSCRMAICGSCGMMVNNVPKLACKTFLRDYTDGMKVEALANFPIERDLVVDMTHFIESLEAIKPYIIGNSRTADQGTNIQTPAQMAKYHQFSGCINCGLCYAACPQFGLNPEFIGPAAITLAHRYNEDSRDHGKKERMAQLNSQNGVWSCTFVGYCSEVCPKHVDPAAAIQQGKVESSKDFLIATLKPR</sequence>